<proteinExistence type="evidence at protein level"/>
<reference key="1">
    <citation type="journal article" date="2008" name="Biosci. Biotechnol. Biochem.">
        <title>Identification of diterpene biosynthetic gene clusters and functional analysis of labdane-related diterpene cyclases in Phomopsis amygdali.</title>
        <authorList>
            <person name="Toyomasu T."/>
            <person name="Niida R."/>
            <person name="Kenmoku H."/>
            <person name="Kanno Y."/>
            <person name="Miura S."/>
            <person name="Nakano C."/>
            <person name="Shiono Y."/>
            <person name="Mitsuhashi W."/>
            <person name="Toshima H."/>
            <person name="Oikawa H."/>
            <person name="Hoshino T."/>
            <person name="Dairi T."/>
            <person name="Kato N."/>
            <person name="Sassa T."/>
        </authorList>
    </citation>
    <scope>NUCLEOTIDE SEQUENCE [MRNA]</scope>
    <scope>FUNCTION</scope>
    <scope>CATALYTIC ACTIVITY</scope>
    <source>
        <strain>N2</strain>
    </source>
</reference>
<sequence length="424" mass="47976">MDFPIRSQARLYPAQCVTFCLYVRVPPLSEWNFLKMQTDARPSATWPSVPKVHKRNRSTSLSDQQTAKKAHANHARLHLPQPIEPVYESQNGSVSQSEEKSSAVEINNSAAGDPQRFAVADLNFSWAEEEEKVVLAPYDYVASNSGKEFRTLILNAFNAWFRVPPESLTIICDVVRMLHTSSLLIDDIQDNSLLRRGRPVAHSIYGVAQTINTGNYVYFLAAKELNKLRNAASALEVFTAEMLNLHRGQGQELYWRDTLKCPTEDEYLKMVSNKTGGLFRMAVKLMQAESPAGPMAPVCDKLVQLLGLVYQIADDYKNLTAVEYTTSKGFCEDLTEGKFSFPVVHSIQSRPEDRRLYQILAQKTTEVEVKKYAVSYIESTGSLEYTKQVVRVLVQRARDELSRIDQGRERNQEMHALLGKMALE</sequence>
<feature type="chain" id="PRO_0000415669" description="Geranylgeranyl pyrophosphate synthase D">
    <location>
        <begin position="1"/>
        <end position="424"/>
    </location>
</feature>
<feature type="region of interest" description="Disordered" evidence="4">
    <location>
        <begin position="42"/>
        <end position="73"/>
    </location>
</feature>
<feature type="compositionally biased region" description="Polar residues" evidence="4">
    <location>
        <begin position="58"/>
        <end position="67"/>
    </location>
</feature>
<feature type="binding site" evidence="2">
    <location>
        <position position="147"/>
    </location>
    <ligand>
        <name>isopentenyl diphosphate</name>
        <dbReference type="ChEBI" id="CHEBI:128769"/>
    </ligand>
</feature>
<feature type="binding site" evidence="2">
    <location>
        <position position="150"/>
    </location>
    <ligand>
        <name>isopentenyl diphosphate</name>
        <dbReference type="ChEBI" id="CHEBI:128769"/>
    </ligand>
</feature>
<feature type="binding site" evidence="3">
    <location>
        <position position="179"/>
    </location>
    <ligand>
        <name>isopentenyl diphosphate</name>
        <dbReference type="ChEBI" id="CHEBI:128769"/>
    </ligand>
</feature>
<feature type="binding site" evidence="2">
    <location>
        <position position="186"/>
    </location>
    <ligand>
        <name>Mg(2+)</name>
        <dbReference type="ChEBI" id="CHEBI:18420"/>
        <label>1</label>
    </ligand>
</feature>
<feature type="binding site" evidence="2">
    <location>
        <position position="186"/>
    </location>
    <ligand>
        <name>Mg(2+)</name>
        <dbReference type="ChEBI" id="CHEBI:18420"/>
        <label>2</label>
    </ligand>
</feature>
<feature type="binding site" evidence="2">
    <location>
        <position position="190"/>
    </location>
    <ligand>
        <name>Mg(2+)</name>
        <dbReference type="ChEBI" id="CHEBI:18420"/>
        <label>1</label>
    </ligand>
</feature>
<feature type="binding site" evidence="2">
    <location>
        <position position="190"/>
    </location>
    <ligand>
        <name>Mg(2+)</name>
        <dbReference type="ChEBI" id="CHEBI:18420"/>
        <label>2</label>
    </ligand>
</feature>
<feature type="binding site" evidence="1">
    <location>
        <position position="195"/>
    </location>
    <ligand>
        <name>dimethylallyl diphosphate</name>
        <dbReference type="ChEBI" id="CHEBI:57623"/>
    </ligand>
</feature>
<feature type="binding site" evidence="2">
    <location>
        <position position="196"/>
    </location>
    <ligand>
        <name>isopentenyl diphosphate</name>
        <dbReference type="ChEBI" id="CHEBI:128769"/>
    </ligand>
</feature>
<feature type="binding site" evidence="1">
    <location>
        <position position="274"/>
    </location>
    <ligand>
        <name>dimethylallyl diphosphate</name>
        <dbReference type="ChEBI" id="CHEBI:57623"/>
    </ligand>
</feature>
<feature type="binding site" evidence="1">
    <location>
        <position position="275"/>
    </location>
    <ligand>
        <name>dimethylallyl diphosphate</name>
        <dbReference type="ChEBI" id="CHEBI:57623"/>
    </ligand>
</feature>
<feature type="binding site" evidence="1">
    <location>
        <position position="311"/>
    </location>
    <ligand>
        <name>dimethylallyl diphosphate</name>
        <dbReference type="ChEBI" id="CHEBI:57623"/>
    </ligand>
</feature>
<feature type="binding site" evidence="1">
    <location>
        <position position="328"/>
    </location>
    <ligand>
        <name>dimethylallyl diphosphate</name>
        <dbReference type="ChEBI" id="CHEBI:57623"/>
    </ligand>
</feature>
<feature type="binding site" evidence="1">
    <location>
        <position position="338"/>
    </location>
    <ligand>
        <name>dimethylallyl diphosphate</name>
        <dbReference type="ChEBI" id="CHEBI:57623"/>
    </ligand>
</feature>
<feature type="site" description="Important for determining product chain length" evidence="1">
    <location>
        <position position="218"/>
    </location>
</feature>
<evidence type="ECO:0000250" key="1"/>
<evidence type="ECO:0000250" key="2">
    <source>
        <dbReference type="UniProtKB" id="P14324"/>
    </source>
</evidence>
<evidence type="ECO:0000250" key="3">
    <source>
        <dbReference type="UniProtKB" id="Q12051"/>
    </source>
</evidence>
<evidence type="ECO:0000256" key="4">
    <source>
        <dbReference type="SAM" id="MobiDB-lite"/>
    </source>
</evidence>
<evidence type="ECO:0000269" key="5">
    <source>
    </source>
</evidence>
<evidence type="ECO:0000305" key="6"/>
<keyword id="KW-0963">Cytoplasm</keyword>
<keyword id="KW-0414">Isoprene biosynthesis</keyword>
<keyword id="KW-0460">Magnesium</keyword>
<keyword id="KW-0479">Metal-binding</keyword>
<keyword id="KW-0808">Transferase</keyword>
<accession>B2DBE9</accession>
<gene>
    <name type="primary">GGS-D</name>
</gene>
<dbReference type="EC" id="2.5.1.1"/>
<dbReference type="EC" id="2.5.1.29"/>
<dbReference type="EC" id="2.5.1.10"/>
<dbReference type="EMBL" id="AB252832">
    <property type="protein sequence ID" value="BAG30960.1"/>
    <property type="molecule type" value="mRNA"/>
</dbReference>
<dbReference type="SMR" id="B2DBE9"/>
<dbReference type="UniPathway" id="UPA00259">
    <property type="reaction ID" value="UER00368"/>
</dbReference>
<dbReference type="UniPathway" id="UPA00260">
    <property type="reaction ID" value="UER00369"/>
</dbReference>
<dbReference type="UniPathway" id="UPA00389">
    <property type="reaction ID" value="UER00564"/>
</dbReference>
<dbReference type="GO" id="GO:0005737">
    <property type="term" value="C:cytoplasm"/>
    <property type="evidence" value="ECO:0007669"/>
    <property type="project" value="UniProtKB-SubCell"/>
</dbReference>
<dbReference type="GO" id="GO:0004337">
    <property type="term" value="F:(2E,6E)-farnesyl diphosphate synthase activity"/>
    <property type="evidence" value="ECO:0007669"/>
    <property type="project" value="UniProtKB-EC"/>
</dbReference>
<dbReference type="GO" id="GO:0004161">
    <property type="term" value="F:dimethylallyltranstransferase activity"/>
    <property type="evidence" value="ECO:0007669"/>
    <property type="project" value="UniProtKB-EC"/>
</dbReference>
<dbReference type="GO" id="GO:0004311">
    <property type="term" value="F:geranylgeranyl diphosphate synthase activity"/>
    <property type="evidence" value="ECO:0007669"/>
    <property type="project" value="UniProtKB-EC"/>
</dbReference>
<dbReference type="GO" id="GO:0046872">
    <property type="term" value="F:metal ion binding"/>
    <property type="evidence" value="ECO:0007669"/>
    <property type="project" value="UniProtKB-KW"/>
</dbReference>
<dbReference type="GO" id="GO:0046165">
    <property type="term" value="P:alcohol biosynthetic process"/>
    <property type="evidence" value="ECO:0007669"/>
    <property type="project" value="UniProtKB-ARBA"/>
</dbReference>
<dbReference type="GO" id="GO:0045337">
    <property type="term" value="P:farnesyl diphosphate biosynthetic process"/>
    <property type="evidence" value="ECO:0007669"/>
    <property type="project" value="UniProtKB-UniPathway"/>
</dbReference>
<dbReference type="GO" id="GO:0033384">
    <property type="term" value="P:geranyl diphosphate biosynthetic process"/>
    <property type="evidence" value="ECO:0007669"/>
    <property type="project" value="UniProtKB-UniPathway"/>
</dbReference>
<dbReference type="GO" id="GO:0033386">
    <property type="term" value="P:geranylgeranyl diphosphate biosynthetic process"/>
    <property type="evidence" value="ECO:0007669"/>
    <property type="project" value="UniProtKB-UniPathway"/>
</dbReference>
<dbReference type="GO" id="GO:0043386">
    <property type="term" value="P:mycotoxin biosynthetic process"/>
    <property type="evidence" value="ECO:0007669"/>
    <property type="project" value="UniProtKB-ARBA"/>
</dbReference>
<dbReference type="CDD" id="cd00685">
    <property type="entry name" value="Trans_IPPS_HT"/>
    <property type="match status" value="1"/>
</dbReference>
<dbReference type="Gene3D" id="1.10.600.10">
    <property type="entry name" value="Farnesyl Diphosphate Synthase"/>
    <property type="match status" value="1"/>
</dbReference>
<dbReference type="InterPro" id="IPR008949">
    <property type="entry name" value="Isoprenoid_synthase_dom_sf"/>
</dbReference>
<dbReference type="InterPro" id="IPR000092">
    <property type="entry name" value="Polyprenyl_synt"/>
</dbReference>
<dbReference type="InterPro" id="IPR033749">
    <property type="entry name" value="Polyprenyl_synt_CS"/>
</dbReference>
<dbReference type="PANTHER" id="PTHR12001">
    <property type="entry name" value="GERANYLGERANYL PYROPHOSPHATE SYNTHASE"/>
    <property type="match status" value="1"/>
</dbReference>
<dbReference type="PANTHER" id="PTHR12001:SF44">
    <property type="entry name" value="GERANYLGERANYL PYROPHOSPHATE SYNTHASE"/>
    <property type="match status" value="1"/>
</dbReference>
<dbReference type="Pfam" id="PF00348">
    <property type="entry name" value="polyprenyl_synt"/>
    <property type="match status" value="1"/>
</dbReference>
<dbReference type="SFLD" id="SFLDS00005">
    <property type="entry name" value="Isoprenoid_Synthase_Type_I"/>
    <property type="match status" value="1"/>
</dbReference>
<dbReference type="SUPFAM" id="SSF48576">
    <property type="entry name" value="Terpenoid synthases"/>
    <property type="match status" value="1"/>
</dbReference>
<dbReference type="PROSITE" id="PS00723">
    <property type="entry name" value="POLYPRENYL_SYNTHASE_1"/>
    <property type="match status" value="1"/>
</dbReference>
<dbReference type="PROSITE" id="PS00444">
    <property type="entry name" value="POLYPRENYL_SYNTHASE_2"/>
    <property type="match status" value="1"/>
</dbReference>
<name>GGS4_PHOAM</name>
<comment type="function">
    <text evidence="5">Catalyzes the trans-addition of the 3 molecules of isopentenyl diphosphate (IPP) onto dimethylallyl diphosphate (DMAPP) to form geranylgeranyl pyrophosphate (GGDP).</text>
</comment>
<comment type="catalytic activity">
    <reaction evidence="5">
        <text>isopentenyl diphosphate + dimethylallyl diphosphate = (2E)-geranyl diphosphate + diphosphate</text>
        <dbReference type="Rhea" id="RHEA:22408"/>
        <dbReference type="ChEBI" id="CHEBI:33019"/>
        <dbReference type="ChEBI" id="CHEBI:57623"/>
        <dbReference type="ChEBI" id="CHEBI:58057"/>
        <dbReference type="ChEBI" id="CHEBI:128769"/>
        <dbReference type="EC" id="2.5.1.1"/>
    </reaction>
</comment>
<comment type="catalytic activity">
    <reaction evidence="5">
        <text>isopentenyl diphosphate + (2E)-geranyl diphosphate = (2E,6E)-farnesyl diphosphate + diphosphate</text>
        <dbReference type="Rhea" id="RHEA:19361"/>
        <dbReference type="ChEBI" id="CHEBI:33019"/>
        <dbReference type="ChEBI" id="CHEBI:58057"/>
        <dbReference type="ChEBI" id="CHEBI:128769"/>
        <dbReference type="ChEBI" id="CHEBI:175763"/>
        <dbReference type="EC" id="2.5.1.10"/>
    </reaction>
</comment>
<comment type="catalytic activity">
    <reaction evidence="5">
        <text>isopentenyl diphosphate + (2E,6E)-farnesyl diphosphate = (2E,6E,10E)-geranylgeranyl diphosphate + diphosphate</text>
        <dbReference type="Rhea" id="RHEA:17653"/>
        <dbReference type="ChEBI" id="CHEBI:33019"/>
        <dbReference type="ChEBI" id="CHEBI:58756"/>
        <dbReference type="ChEBI" id="CHEBI:128769"/>
        <dbReference type="ChEBI" id="CHEBI:175763"/>
        <dbReference type="EC" id="2.5.1.29"/>
    </reaction>
</comment>
<comment type="cofactor">
    <cofactor evidence="1">
        <name>Mg(2+)</name>
        <dbReference type="ChEBI" id="CHEBI:18420"/>
    </cofactor>
    <text evidence="1">Binds 2 Mg(2+) ions per subunit.</text>
</comment>
<comment type="pathway">
    <text>Isoprenoid biosynthesis; farnesyl diphosphate biosynthesis; farnesyl diphosphate from geranyl diphosphate and isopentenyl diphosphate: step 1/1.</text>
</comment>
<comment type="pathway">
    <text>Isoprenoid biosynthesis; geranyl diphosphate biosynthesis; geranyl diphosphate from dimethylallyl diphosphate and isopentenyl diphosphate: step 1/1.</text>
</comment>
<comment type="pathway">
    <text>Isoprenoid biosynthesis; geranylgeranyl diphosphate biosynthesis; geranylgeranyl diphosphate from farnesyl diphosphate and isopentenyl diphosphate: step 1/1.</text>
</comment>
<comment type="subcellular location">
    <subcellularLocation>
        <location>Cytoplasm</location>
    </subcellularLocation>
</comment>
<comment type="similarity">
    <text evidence="6">Belongs to the FPP/GGPP synthase family.</text>
</comment>
<organism>
    <name type="scientific">Phomopsis amygdali</name>
    <name type="common">Fusicoccum amygdali</name>
    <dbReference type="NCBI Taxonomy" id="1214568"/>
    <lineage>
        <taxon>Eukaryota</taxon>
        <taxon>Fungi</taxon>
        <taxon>Dikarya</taxon>
        <taxon>Ascomycota</taxon>
        <taxon>Pezizomycotina</taxon>
        <taxon>Sordariomycetes</taxon>
        <taxon>Sordariomycetidae</taxon>
        <taxon>Diaporthales</taxon>
        <taxon>Diaporthaceae</taxon>
        <taxon>Diaporthe</taxon>
    </lineage>
</organism>
<protein>
    <recommendedName>
        <fullName>Geranylgeranyl pyrophosphate synthase D</fullName>
        <shortName>GGPP synthase D</shortName>
        <shortName>GGPPSase</shortName>
    </recommendedName>
    <alternativeName>
        <fullName>(2E,6E)-farnesyl diphosphate synthase D</fullName>
    </alternativeName>
    <alternativeName>
        <fullName>Dimethylallyltranstransferase D</fullName>
        <ecNumber>2.5.1.1</ecNumber>
    </alternativeName>
    <alternativeName>
        <fullName>Farnesyl diphosphate synthase D</fullName>
    </alternativeName>
    <alternativeName>
        <fullName>Farnesyltranstransferase D</fullName>
        <ecNumber>2.5.1.29</ecNumber>
    </alternativeName>
    <alternativeName>
        <fullName>Geranylgeranyl diphosphate synthase D</fullName>
    </alternativeName>
    <alternativeName>
        <fullName>Geranyltranstransferase D</fullName>
        <ecNumber>2.5.1.10</ecNumber>
    </alternativeName>
</protein>